<gene>
    <name type="primary">lpdA</name>
    <name type="ordered locus">c0145</name>
</gene>
<dbReference type="EC" id="1.8.1.4"/>
<dbReference type="EMBL" id="AE014075">
    <property type="protein sequence ID" value="AAN78639.1"/>
    <property type="status" value="ALT_INIT"/>
    <property type="molecule type" value="Genomic_DNA"/>
</dbReference>
<dbReference type="RefSeq" id="WP_000102485.1">
    <property type="nucleotide sequence ID" value="NZ_CP051263.1"/>
</dbReference>
<dbReference type="SMR" id="P0A9P1"/>
<dbReference type="STRING" id="199310.c0145"/>
<dbReference type="GeneID" id="93777320"/>
<dbReference type="KEGG" id="ecc:c0145"/>
<dbReference type="eggNOG" id="COG1249">
    <property type="taxonomic scope" value="Bacteria"/>
</dbReference>
<dbReference type="HOGENOM" id="CLU_016755_0_1_6"/>
<dbReference type="Proteomes" id="UP000001410">
    <property type="component" value="Chromosome"/>
</dbReference>
<dbReference type="GO" id="GO:0005737">
    <property type="term" value="C:cytoplasm"/>
    <property type="evidence" value="ECO:0007669"/>
    <property type="project" value="UniProtKB-SubCell"/>
</dbReference>
<dbReference type="GO" id="GO:0004148">
    <property type="term" value="F:dihydrolipoyl dehydrogenase (NADH) activity"/>
    <property type="evidence" value="ECO:0007669"/>
    <property type="project" value="UniProtKB-EC"/>
</dbReference>
<dbReference type="GO" id="GO:0050660">
    <property type="term" value="F:flavin adenine dinucleotide binding"/>
    <property type="evidence" value="ECO:0007669"/>
    <property type="project" value="InterPro"/>
</dbReference>
<dbReference type="GO" id="GO:0006103">
    <property type="term" value="P:2-oxoglutarate metabolic process"/>
    <property type="evidence" value="ECO:0007669"/>
    <property type="project" value="TreeGrafter"/>
</dbReference>
<dbReference type="FunFam" id="3.30.390.30:FF:000001">
    <property type="entry name" value="Dihydrolipoyl dehydrogenase"/>
    <property type="match status" value="1"/>
</dbReference>
<dbReference type="FunFam" id="3.50.50.60:FF:000014">
    <property type="entry name" value="Dihydrolipoyl dehydrogenase"/>
    <property type="match status" value="1"/>
</dbReference>
<dbReference type="FunFam" id="3.50.50.60:FF:000001">
    <property type="entry name" value="Dihydrolipoyl dehydrogenase, mitochondrial"/>
    <property type="match status" value="1"/>
</dbReference>
<dbReference type="Gene3D" id="3.30.390.30">
    <property type="match status" value="1"/>
</dbReference>
<dbReference type="Gene3D" id="3.50.50.60">
    <property type="entry name" value="FAD/NAD(P)-binding domain"/>
    <property type="match status" value="2"/>
</dbReference>
<dbReference type="InterPro" id="IPR050151">
    <property type="entry name" value="Class-I_Pyr_Nuc-Dis_Oxidored"/>
</dbReference>
<dbReference type="InterPro" id="IPR036188">
    <property type="entry name" value="FAD/NAD-bd_sf"/>
</dbReference>
<dbReference type="InterPro" id="IPR023753">
    <property type="entry name" value="FAD/NAD-binding_dom"/>
</dbReference>
<dbReference type="InterPro" id="IPR016156">
    <property type="entry name" value="FAD/NAD-linked_Rdtase_dimer_sf"/>
</dbReference>
<dbReference type="InterPro" id="IPR006258">
    <property type="entry name" value="Lipoamide_DH"/>
</dbReference>
<dbReference type="InterPro" id="IPR001100">
    <property type="entry name" value="Pyr_nuc-diS_OxRdtase"/>
</dbReference>
<dbReference type="InterPro" id="IPR004099">
    <property type="entry name" value="Pyr_nucl-diS_OxRdtase_dimer"/>
</dbReference>
<dbReference type="InterPro" id="IPR012999">
    <property type="entry name" value="Pyr_OxRdtase_I_AS"/>
</dbReference>
<dbReference type="NCBIfam" id="TIGR01350">
    <property type="entry name" value="lipoamide_DH"/>
    <property type="match status" value="1"/>
</dbReference>
<dbReference type="PANTHER" id="PTHR22912:SF160">
    <property type="entry name" value="DIHYDROLIPOYL DEHYDROGENASE"/>
    <property type="match status" value="1"/>
</dbReference>
<dbReference type="PANTHER" id="PTHR22912">
    <property type="entry name" value="DISULFIDE OXIDOREDUCTASE"/>
    <property type="match status" value="1"/>
</dbReference>
<dbReference type="Pfam" id="PF07992">
    <property type="entry name" value="Pyr_redox_2"/>
    <property type="match status" value="1"/>
</dbReference>
<dbReference type="Pfam" id="PF02852">
    <property type="entry name" value="Pyr_redox_dim"/>
    <property type="match status" value="1"/>
</dbReference>
<dbReference type="PIRSF" id="PIRSF000350">
    <property type="entry name" value="Mercury_reductase_MerA"/>
    <property type="match status" value="1"/>
</dbReference>
<dbReference type="PRINTS" id="PR00368">
    <property type="entry name" value="FADPNR"/>
</dbReference>
<dbReference type="PRINTS" id="PR00411">
    <property type="entry name" value="PNDRDTASEI"/>
</dbReference>
<dbReference type="SUPFAM" id="SSF51905">
    <property type="entry name" value="FAD/NAD(P)-binding domain"/>
    <property type="match status" value="1"/>
</dbReference>
<dbReference type="SUPFAM" id="SSF55424">
    <property type="entry name" value="FAD/NAD-linked reductases, dimerisation (C-terminal) domain"/>
    <property type="match status" value="1"/>
</dbReference>
<dbReference type="PROSITE" id="PS00076">
    <property type="entry name" value="PYRIDINE_REDOX_1"/>
    <property type="match status" value="1"/>
</dbReference>
<keyword id="KW-0007">Acetylation</keyword>
<keyword id="KW-0963">Cytoplasm</keyword>
<keyword id="KW-1015">Disulfide bond</keyword>
<keyword id="KW-0274">FAD</keyword>
<keyword id="KW-0285">Flavoprotein</keyword>
<keyword id="KW-0520">NAD</keyword>
<keyword id="KW-0560">Oxidoreductase</keyword>
<keyword id="KW-0676">Redox-active center</keyword>
<keyword id="KW-1185">Reference proteome</keyword>
<comment type="function">
    <text evidence="1">Lipoamide dehydrogenase is a component of the glycine cleavage system as well as of the alpha-ketoacid dehydrogenase complexes.</text>
</comment>
<comment type="catalytic activity">
    <reaction>
        <text>N(6)-[(R)-dihydrolipoyl]-L-lysyl-[protein] + NAD(+) = N(6)-[(R)-lipoyl]-L-lysyl-[protein] + NADH + H(+)</text>
        <dbReference type="Rhea" id="RHEA:15045"/>
        <dbReference type="Rhea" id="RHEA-COMP:10474"/>
        <dbReference type="Rhea" id="RHEA-COMP:10475"/>
        <dbReference type="ChEBI" id="CHEBI:15378"/>
        <dbReference type="ChEBI" id="CHEBI:57540"/>
        <dbReference type="ChEBI" id="CHEBI:57945"/>
        <dbReference type="ChEBI" id="CHEBI:83099"/>
        <dbReference type="ChEBI" id="CHEBI:83100"/>
        <dbReference type="EC" id="1.8.1.4"/>
    </reaction>
</comment>
<comment type="cofactor">
    <cofactor evidence="1">
        <name>FAD</name>
        <dbReference type="ChEBI" id="CHEBI:57692"/>
    </cofactor>
    <text evidence="1">Binds 1 FAD per subunit.</text>
</comment>
<comment type="subunit">
    <text evidence="1">Homodimer.</text>
</comment>
<comment type="subcellular location">
    <subcellularLocation>
        <location evidence="1">Cytoplasm</location>
    </subcellularLocation>
</comment>
<comment type="miscellaneous">
    <text evidence="1">The active site is a redox-active disulfide bond.</text>
</comment>
<comment type="similarity">
    <text evidence="2">Belongs to the class-I pyridine nucleotide-disulfide oxidoreductase family.</text>
</comment>
<comment type="sequence caution" evidence="2">
    <conflict type="erroneous initiation">
        <sequence resource="EMBL-CDS" id="AAN78639"/>
    </conflict>
</comment>
<feature type="initiator methionine" description="Removed" evidence="1">
    <location>
        <position position="1"/>
    </location>
</feature>
<feature type="chain" id="PRO_0000068029" description="Dihydrolipoyl dehydrogenase">
    <location>
        <begin position="2"/>
        <end position="474"/>
    </location>
</feature>
<feature type="active site" description="Proton acceptor" evidence="1">
    <location>
        <position position="445"/>
    </location>
</feature>
<feature type="binding site" evidence="1">
    <location>
        <begin position="36"/>
        <end position="45"/>
    </location>
    <ligand>
        <name>FAD</name>
        <dbReference type="ChEBI" id="CHEBI:57692"/>
    </ligand>
</feature>
<feature type="binding site" evidence="1">
    <location>
        <position position="54"/>
    </location>
    <ligand>
        <name>FAD</name>
        <dbReference type="ChEBI" id="CHEBI:57692"/>
    </ligand>
</feature>
<feature type="binding site" evidence="1">
    <location>
        <position position="117"/>
    </location>
    <ligand>
        <name>FAD</name>
        <dbReference type="ChEBI" id="CHEBI:57692"/>
    </ligand>
</feature>
<feature type="binding site" evidence="1">
    <location>
        <begin position="182"/>
        <end position="186"/>
    </location>
    <ligand>
        <name>NAD(+)</name>
        <dbReference type="ChEBI" id="CHEBI:57540"/>
    </ligand>
</feature>
<feature type="binding site" evidence="1">
    <location>
        <position position="205"/>
    </location>
    <ligand>
        <name>NAD(+)</name>
        <dbReference type="ChEBI" id="CHEBI:57540"/>
    </ligand>
</feature>
<feature type="binding site" evidence="1">
    <location>
        <position position="238"/>
    </location>
    <ligand>
        <name>NAD(+)</name>
        <dbReference type="ChEBI" id="CHEBI:57540"/>
    </ligand>
</feature>
<feature type="binding site" evidence="1">
    <location>
        <begin position="270"/>
        <end position="273"/>
    </location>
    <ligand>
        <name>NAD(+)</name>
        <dbReference type="ChEBI" id="CHEBI:57540"/>
    </ligand>
</feature>
<feature type="binding site" evidence="1">
    <location>
        <position position="313"/>
    </location>
    <ligand>
        <name>FAD</name>
        <dbReference type="ChEBI" id="CHEBI:57692"/>
    </ligand>
</feature>
<feature type="binding site" evidence="1">
    <location>
        <position position="321"/>
    </location>
    <ligand>
        <name>FAD</name>
        <dbReference type="ChEBI" id="CHEBI:57692"/>
    </ligand>
</feature>
<feature type="modified residue" description="N6-acetyllysine" evidence="1">
    <location>
        <position position="220"/>
    </location>
</feature>
<feature type="disulfide bond" description="Redox-active" evidence="1">
    <location>
        <begin position="45"/>
        <end position="50"/>
    </location>
</feature>
<organism>
    <name type="scientific">Escherichia coli O6:H1 (strain CFT073 / ATCC 700928 / UPEC)</name>
    <dbReference type="NCBI Taxonomy" id="199310"/>
    <lineage>
        <taxon>Bacteria</taxon>
        <taxon>Pseudomonadati</taxon>
        <taxon>Pseudomonadota</taxon>
        <taxon>Gammaproteobacteria</taxon>
        <taxon>Enterobacterales</taxon>
        <taxon>Enterobacteriaceae</taxon>
        <taxon>Escherichia</taxon>
    </lineage>
</organism>
<accession>P0A9P1</accession>
<accession>P00391</accession>
<evidence type="ECO:0000250" key="1"/>
<evidence type="ECO:0000305" key="2"/>
<name>DLDH_ECOL6</name>
<protein>
    <recommendedName>
        <fullName>Dihydrolipoyl dehydrogenase</fullName>
        <ecNumber>1.8.1.4</ecNumber>
    </recommendedName>
    <alternativeName>
        <fullName>Dihydrolipoamide dehydrogenase</fullName>
    </alternativeName>
    <alternativeName>
        <fullName>E3 component of pyruvate and 2-oxoglutarate dehydrogenases complexes</fullName>
    </alternativeName>
    <alternativeName>
        <fullName>Glycine cleavage system L protein</fullName>
    </alternativeName>
</protein>
<proteinExistence type="inferred from homology"/>
<reference key="1">
    <citation type="journal article" date="2002" name="Proc. Natl. Acad. Sci. U.S.A.">
        <title>Extensive mosaic structure revealed by the complete genome sequence of uropathogenic Escherichia coli.</title>
        <authorList>
            <person name="Welch R.A."/>
            <person name="Burland V."/>
            <person name="Plunkett G. III"/>
            <person name="Redford P."/>
            <person name="Roesch P."/>
            <person name="Rasko D."/>
            <person name="Buckles E.L."/>
            <person name="Liou S.-R."/>
            <person name="Boutin A."/>
            <person name="Hackett J."/>
            <person name="Stroud D."/>
            <person name="Mayhew G.F."/>
            <person name="Rose D.J."/>
            <person name="Zhou S."/>
            <person name="Schwartz D.C."/>
            <person name="Perna N.T."/>
            <person name="Mobley H.L.T."/>
            <person name="Donnenberg M.S."/>
            <person name="Blattner F.R."/>
        </authorList>
    </citation>
    <scope>NUCLEOTIDE SEQUENCE [LARGE SCALE GENOMIC DNA]</scope>
    <source>
        <strain>CFT073 / ATCC 700928 / UPEC</strain>
    </source>
</reference>
<sequence>MSTEIKTQVVVLGAGPAGYSAAFRCADLGLETVIVERYNTLGGVCLNVGCIPSKALLHVAKVIEEAKALAEHGIVFGEPKTDIDKIRTWKEKVINQLTGGLAGMAKGRKVKVVNGLGKFTGANTLEVEGENGKTVINFDNAIIAAGSRPIQLPFIPHEDPRIWDSTDALELKEVPERLLVMGGGIIGLEMGTVYHALGSQIDVVEMFDQVIPAADKDIVKVFTKRISKKFNLMLETKVTAVEAKEDGIYVTMEGKKAPAEPQRYDAVLVAIGRVPNGKNLDAGKAGVEVDDRGFIRVDKQLRTNVPHIFAIGDIVGQPMLAHKGVHEGHVAAEVIAGKKHYFDPKVIPSIAYTEPEVAWVGLTEKEAKEKGISYETATFPWAASGRAIASDCADGMTKLIFDKESHRVIGGAIVGTNGGELLGEIGLAIEMGCDAEDIALTIHAHPTLHESVGLAAEVFEGSITDLPNPKAKKK</sequence>